<organism>
    <name type="scientific">Rhizopus oryzae</name>
    <name type="common">Mucormycosis agent</name>
    <name type="synonym">Rhizopus arrhizus var. delemar</name>
    <dbReference type="NCBI Taxonomy" id="64495"/>
    <lineage>
        <taxon>Eukaryota</taxon>
        <taxon>Fungi</taxon>
        <taxon>Fungi incertae sedis</taxon>
        <taxon>Mucoromycota</taxon>
        <taxon>Mucoromycotina</taxon>
        <taxon>Mucoromycetes</taxon>
        <taxon>Mucorales</taxon>
        <taxon>Mucorineae</taxon>
        <taxon>Rhizopodaceae</taxon>
        <taxon>Rhizopus</taxon>
    </lineage>
</organism>
<evidence type="ECO:0000250" key="1"/>
<evidence type="ECO:0000255" key="2"/>
<evidence type="ECO:0000255" key="3">
    <source>
        <dbReference type="PROSITE-ProRule" id="PRU01096"/>
    </source>
</evidence>
<evidence type="ECO:0000255" key="4">
    <source>
        <dbReference type="PROSITE-ProRule" id="PRU10061"/>
    </source>
</evidence>
<evidence type="ECO:0000269" key="5">
    <source>
    </source>
</evidence>
<evidence type="ECO:0000305" key="6"/>
<proteinExistence type="evidence at protein level"/>
<keyword id="KW-0119">Carbohydrate metabolism</keyword>
<keyword id="KW-0903">Direct protein sequencing</keyword>
<keyword id="KW-1015">Disulfide bond</keyword>
<keyword id="KW-0326">Glycosidase</keyword>
<keyword id="KW-0378">Hydrolase</keyword>
<keyword id="KW-0624">Polysaccharide degradation</keyword>
<keyword id="KW-0964">Secreted</keyword>
<keyword id="KW-0732">Signal</keyword>
<keyword id="KW-0858">Xylan degradation</keyword>
<protein>
    <recommendedName>
        <fullName>Endo-1,4-beta-xylanase 1</fullName>
        <shortName>Xylanase 1</shortName>
        <ecNumber>3.2.1.8</ecNumber>
    </recommendedName>
    <alternativeName>
        <fullName>1,4-beta-D-xylan xylanohydrolase 1</fullName>
    </alternativeName>
</protein>
<comment type="function">
    <text evidence="5">Endo-1,4-beta-xylanase involved in the hydrolysis of xylan, a major structural heterogeneous polysaccharide found in plant biomass representing the second most abundant polysaccharide in the biosphere, after cellulose.</text>
</comment>
<comment type="catalytic activity">
    <reaction evidence="5">
        <text>Endohydrolysis of (1-&gt;4)-beta-D-xylosidic linkages in xylans.</text>
        <dbReference type="EC" id="3.2.1.8"/>
    </reaction>
</comment>
<comment type="biophysicochemical properties">
    <kinetics>
        <KM evidence="5">11 mg/ml for birchwood xylan</KM>
    </kinetics>
    <phDependence>
        <text evidence="5">Optimum pH is 5.0-6.0.</text>
    </phDependence>
    <temperatureDependence>
        <text evidence="5">Optimum temperature is 40 degrees Celsius.</text>
    </temperatureDependence>
</comment>
<comment type="pathway">
    <text>Glycan degradation; xylan degradation.</text>
</comment>
<comment type="subcellular location">
    <subcellularLocation>
        <location evidence="5">Secreted</location>
    </subcellularLocation>
</comment>
<comment type="similarity">
    <text evidence="6">Belongs to the glycosyl hydrolase 10 (cellulase F) family.</text>
</comment>
<sequence>MIPNITQLKTAALVMLFAGQALSGPVESRQASESIDAKFKAHGKKYLGNIADQGTLNGNPKTPAIIKANFGQLSPENSMKWDATEPSQGQFSFAGSDYFVEFAETNGKLIRGHTLVWHSQLPSWVSSITDKTTLTDVMKNHITTVMKQYKGKVYAWDVVNEIFEEDGTLRDSVFSRVLGEDFVRIAFETAREADPEAKLYINDYNLDSATSAKLQGMVSHVKKWIAAGVPIDGIGSQTHLGAGAGAAASGSLNALASAGTEEVAVTELDIAGASSTDYVDVVNACLDQPKCVGITVWGVADPDSWRADESPLLFDASYNPKEAYNAIAAAL</sequence>
<gene>
    <name type="primary">xyn1</name>
</gene>
<dbReference type="EC" id="3.2.1.8"/>
<dbReference type="EMBL" id="KF640266">
    <property type="protein sequence ID" value="AHF72523.1"/>
    <property type="molecule type" value="Genomic_DNA"/>
</dbReference>
<dbReference type="SMR" id="W0HFK8"/>
<dbReference type="CAZy" id="GH10">
    <property type="family name" value="Glycoside Hydrolase Family 10"/>
</dbReference>
<dbReference type="UniPathway" id="UPA00114"/>
<dbReference type="GO" id="GO:0005576">
    <property type="term" value="C:extracellular region"/>
    <property type="evidence" value="ECO:0007669"/>
    <property type="project" value="UniProtKB-SubCell"/>
</dbReference>
<dbReference type="GO" id="GO:0031176">
    <property type="term" value="F:endo-1,4-beta-xylanase activity"/>
    <property type="evidence" value="ECO:0007669"/>
    <property type="project" value="UniProtKB-EC"/>
</dbReference>
<dbReference type="GO" id="GO:0045493">
    <property type="term" value="P:xylan catabolic process"/>
    <property type="evidence" value="ECO:0007669"/>
    <property type="project" value="UniProtKB-UniPathway"/>
</dbReference>
<dbReference type="FunFam" id="3.20.20.80:FF:000094">
    <property type="entry name" value="Endo-1,4-beta-xylanase"/>
    <property type="match status" value="1"/>
</dbReference>
<dbReference type="Gene3D" id="3.20.20.80">
    <property type="entry name" value="Glycosidases"/>
    <property type="match status" value="1"/>
</dbReference>
<dbReference type="InterPro" id="IPR044846">
    <property type="entry name" value="GH10"/>
</dbReference>
<dbReference type="InterPro" id="IPR031158">
    <property type="entry name" value="GH10_AS"/>
</dbReference>
<dbReference type="InterPro" id="IPR001000">
    <property type="entry name" value="GH10_dom"/>
</dbReference>
<dbReference type="InterPro" id="IPR017853">
    <property type="entry name" value="Glycoside_hydrolase_SF"/>
</dbReference>
<dbReference type="PANTHER" id="PTHR31490:SF76">
    <property type="entry name" value="ENDO-1,4-BETA-XYLANASE C"/>
    <property type="match status" value="1"/>
</dbReference>
<dbReference type="PANTHER" id="PTHR31490">
    <property type="entry name" value="GLYCOSYL HYDROLASE"/>
    <property type="match status" value="1"/>
</dbReference>
<dbReference type="Pfam" id="PF00331">
    <property type="entry name" value="Glyco_hydro_10"/>
    <property type="match status" value="1"/>
</dbReference>
<dbReference type="PRINTS" id="PR00134">
    <property type="entry name" value="GLHYDRLASE10"/>
</dbReference>
<dbReference type="SMART" id="SM00633">
    <property type="entry name" value="Glyco_10"/>
    <property type="match status" value="1"/>
</dbReference>
<dbReference type="SUPFAM" id="SSF51445">
    <property type="entry name" value="(Trans)glycosidases"/>
    <property type="match status" value="1"/>
</dbReference>
<dbReference type="PROSITE" id="PS00591">
    <property type="entry name" value="GH10_1"/>
    <property type="match status" value="1"/>
</dbReference>
<dbReference type="PROSITE" id="PS51760">
    <property type="entry name" value="GH10_2"/>
    <property type="match status" value="1"/>
</dbReference>
<accession>W0HFK8</accession>
<name>XYN1_RHIOR</name>
<feature type="signal peptide" evidence="2">
    <location>
        <begin position="1"/>
        <end position="23"/>
    </location>
</feature>
<feature type="chain" id="PRO_0000429747" description="Endo-1,4-beta-xylanase 1">
    <location>
        <begin position="24"/>
        <end position="331"/>
    </location>
</feature>
<feature type="domain" description="GH10" evidence="3">
    <location>
        <begin position="50"/>
        <end position="330"/>
    </location>
</feature>
<feature type="active site" description="Proton donor" evidence="1">
    <location>
        <position position="161"/>
    </location>
</feature>
<feature type="active site" description="Nucleophile" evidence="4">
    <location>
        <position position="267"/>
    </location>
</feature>
<feature type="disulfide bond" evidence="1">
    <location>
        <begin position="285"/>
        <end position="291"/>
    </location>
</feature>
<reference key="1">
    <citation type="journal article" date="2014" name="Appl. Microbiol. Biotechnol.">
        <title>Cloning and characterization of the first GH10 and GH11 xylanases from Rhizopus oryzae.</title>
        <authorList>
            <person name="Xiao Z."/>
            <person name="Grosse S."/>
            <person name="Bergeron H."/>
            <person name="Lau P.C."/>
        </authorList>
    </citation>
    <scope>NUCLEOTIDE SEQUENCE [GENOMIC DNA]</scope>
    <scope>PROTEIN SEQUENCE OF 147-158; 195-206 AND 218-229</scope>
    <scope>SUBCELLULAR LOCATION</scope>
    <scope>FUNCTION</scope>
    <scope>CATALYTIC ACTIVITY</scope>
    <scope>BIOPHYSICOCHEMICAL PROPERTIES</scope>
</reference>